<gene>
    <name type="primary">Samd4a</name>
    <name type="synonym">Samd4</name>
    <name type="synonym">Smaug1</name>
</gene>
<sequence length="711" mass="78359">MMFRDQVGVLAGWFKGWNECEQTVALLSLLKRVSQTQARFLQLCLEHSLADCAELHVLEGEANSPGIINQWQQESKDKVISLLLTHLPLLKPGNLDAKAEYMKLLPKILAHSIEHNQHIEESRQLLSYALIHPATSLEDRSALAMWLNHLEDRTSTSFGSQNRGRSDSVDYGQTHYYHQRQNSDDKLNGWQNSRDSGICISASNWQDKSLGCENGHVPLYSSSSVPATINTIGTGASTILSGQAHHSPLKRSVSLTPPMNVPNQPLGHGWMSHEDLRARGPQCLPSDHAPLSPQSSVASSGSGGSEHLEDQTTARNTFQEEGSGMKDVPAWLKSLRLHKYAALFSQMTYEEMMALTECQLEAQNVTKGARHKIVISIQKLKERQNLLKSLERDIIEGGSLRTPLQELHQMILTPIKAYSSPSTTPEVRCREPSLMESPSPDCKDSAAAVTSATASASAGASGGLQPPQLSSCDGELAVAPLPEGDLPGQFTRVMGKVCTQLLVSRPDEENISSYLQLLDKCLVHEAFTETQKKRLLSWKQQVQKLFRSFPRKTLLDISGYRQQRNRGFGQSNSLPTASSVGSGMGRRNPRQYQIASRNVPSARLGLLGTSGFVSSNQRHTAANPTIMKQGRQNLWFANPGGSNSMPSRTHSSVQKTRSLPVHTSPQNMLMFQQPEFQLPVTEPDINNRLESLCLSMTEHALGDGVDRTSTI</sequence>
<proteinExistence type="evidence at protein level"/>
<keyword id="KW-0025">Alternative splicing</keyword>
<keyword id="KW-0966">Cell projection</keyword>
<keyword id="KW-0963">Cytoplasm</keyword>
<keyword id="KW-0488">Methylation</keyword>
<keyword id="KW-0597">Phosphoprotein</keyword>
<keyword id="KW-1185">Reference proteome</keyword>
<keyword id="KW-0678">Repressor</keyword>
<keyword id="KW-0770">Synapse</keyword>
<keyword id="KW-0771">Synaptosome</keyword>
<keyword id="KW-0810">Translation regulation</keyword>
<comment type="function">
    <text evidence="1">Acts as a translational repressor of SRE-containing messengers.</text>
</comment>
<comment type="subcellular location">
    <subcellularLocation>
        <location evidence="5">Cytoplasm</location>
    </subcellularLocation>
    <subcellularLocation>
        <location evidence="5">Cell projection</location>
        <location evidence="5">Dendrite</location>
    </subcellularLocation>
    <subcellularLocation>
        <location evidence="5">Synapse</location>
        <location evidence="5">Synaptosome</location>
    </subcellularLocation>
    <text evidence="1">Colocalizes throughout the cytoplasm in granules with polyadenylated RNAs, PABPC1 and STAU1. Also frequently colocalizes in cytoplasmic stress granule-like foci with ELAVL1, TIA1 and TIAL1. Shuttles between the nucleus and the cytoplasm in a CRM1-dependent manner (By similarity). Enriched in synaptoneurosomes.</text>
</comment>
<comment type="alternative products">
    <event type="alternative splicing"/>
    <isoform>
        <id>Q8CBY1-1</id>
        <name>1</name>
        <sequence type="displayed"/>
    </isoform>
    <isoform>
        <id>Q8CBY1-2</id>
        <name>2</name>
        <sequence type="described" ref="VSP_037782"/>
    </isoform>
    <isoform>
        <id>Q8CBY1-3</id>
        <name>3</name>
        <sequence type="described" ref="VSP_037783"/>
    </isoform>
    <isoform>
        <id>Q8CBY1-4</id>
        <name>4</name>
        <sequence type="described" ref="VSP_037781"/>
    </isoform>
</comment>
<comment type="tissue specificity">
    <text evidence="5">Expressed in brain (at protein level).</text>
</comment>
<comment type="similarity">
    <text evidence="9">Belongs to the SMAUG family.</text>
</comment>
<comment type="sequence caution" evidence="9">
    <conflict type="miscellaneous discrepancy">
        <sequence resource="EMBL-CDS" id="ABB83932"/>
    </conflict>
    <text>Aberrant splicing.</text>
</comment>
<organism>
    <name type="scientific">Mus musculus</name>
    <name type="common">Mouse</name>
    <dbReference type="NCBI Taxonomy" id="10090"/>
    <lineage>
        <taxon>Eukaryota</taxon>
        <taxon>Metazoa</taxon>
        <taxon>Chordata</taxon>
        <taxon>Craniata</taxon>
        <taxon>Vertebrata</taxon>
        <taxon>Euteleostomi</taxon>
        <taxon>Mammalia</taxon>
        <taxon>Eutheria</taxon>
        <taxon>Euarchontoglires</taxon>
        <taxon>Glires</taxon>
        <taxon>Rodentia</taxon>
        <taxon>Myomorpha</taxon>
        <taxon>Muroidea</taxon>
        <taxon>Muridae</taxon>
        <taxon>Murinae</taxon>
        <taxon>Mus</taxon>
        <taxon>Mus</taxon>
    </lineage>
</organism>
<reference key="1">
    <citation type="journal article" date="2005" name="J. Biol. Chem.">
        <title>Mammalian Smaug is a translational repressor that forms cytoplasmic foci similar to stress granules.</title>
        <authorList>
            <person name="Baez M.V."/>
            <person name="Boccaccio G.L."/>
        </authorList>
    </citation>
    <scope>NUCLEOTIDE SEQUENCE [MRNA] (ISOFORM 3)</scope>
    <scope>SUBCELLULAR LOCATION</scope>
    <scope>TISSUE SPECIFICITY</scope>
    <source>
        <strain>BALB/cJ</strain>
        <tissue>Embryo</tissue>
    </source>
</reference>
<reference key="2">
    <citation type="journal article" date="2005" name="Science">
        <title>The transcriptional landscape of the mammalian genome.</title>
        <authorList>
            <person name="Carninci P."/>
            <person name="Kasukawa T."/>
            <person name="Katayama S."/>
            <person name="Gough J."/>
            <person name="Frith M.C."/>
            <person name="Maeda N."/>
            <person name="Oyama R."/>
            <person name="Ravasi T."/>
            <person name="Lenhard B."/>
            <person name="Wells C."/>
            <person name="Kodzius R."/>
            <person name="Shimokawa K."/>
            <person name="Bajic V.B."/>
            <person name="Brenner S.E."/>
            <person name="Batalov S."/>
            <person name="Forrest A.R."/>
            <person name="Zavolan M."/>
            <person name="Davis M.J."/>
            <person name="Wilming L.G."/>
            <person name="Aidinis V."/>
            <person name="Allen J.E."/>
            <person name="Ambesi-Impiombato A."/>
            <person name="Apweiler R."/>
            <person name="Aturaliya R.N."/>
            <person name="Bailey T.L."/>
            <person name="Bansal M."/>
            <person name="Baxter L."/>
            <person name="Beisel K.W."/>
            <person name="Bersano T."/>
            <person name="Bono H."/>
            <person name="Chalk A.M."/>
            <person name="Chiu K.P."/>
            <person name="Choudhary V."/>
            <person name="Christoffels A."/>
            <person name="Clutterbuck D.R."/>
            <person name="Crowe M.L."/>
            <person name="Dalla E."/>
            <person name="Dalrymple B.P."/>
            <person name="de Bono B."/>
            <person name="Della Gatta G."/>
            <person name="di Bernardo D."/>
            <person name="Down T."/>
            <person name="Engstrom P."/>
            <person name="Fagiolini M."/>
            <person name="Faulkner G."/>
            <person name="Fletcher C.F."/>
            <person name="Fukushima T."/>
            <person name="Furuno M."/>
            <person name="Futaki S."/>
            <person name="Gariboldi M."/>
            <person name="Georgii-Hemming P."/>
            <person name="Gingeras T.R."/>
            <person name="Gojobori T."/>
            <person name="Green R.E."/>
            <person name="Gustincich S."/>
            <person name="Harbers M."/>
            <person name="Hayashi Y."/>
            <person name="Hensch T.K."/>
            <person name="Hirokawa N."/>
            <person name="Hill D."/>
            <person name="Huminiecki L."/>
            <person name="Iacono M."/>
            <person name="Ikeo K."/>
            <person name="Iwama A."/>
            <person name="Ishikawa T."/>
            <person name="Jakt M."/>
            <person name="Kanapin A."/>
            <person name="Katoh M."/>
            <person name="Kawasawa Y."/>
            <person name="Kelso J."/>
            <person name="Kitamura H."/>
            <person name="Kitano H."/>
            <person name="Kollias G."/>
            <person name="Krishnan S.P."/>
            <person name="Kruger A."/>
            <person name="Kummerfeld S.K."/>
            <person name="Kurochkin I.V."/>
            <person name="Lareau L.F."/>
            <person name="Lazarevic D."/>
            <person name="Lipovich L."/>
            <person name="Liu J."/>
            <person name="Liuni S."/>
            <person name="McWilliam S."/>
            <person name="Madan Babu M."/>
            <person name="Madera M."/>
            <person name="Marchionni L."/>
            <person name="Matsuda H."/>
            <person name="Matsuzawa S."/>
            <person name="Miki H."/>
            <person name="Mignone F."/>
            <person name="Miyake S."/>
            <person name="Morris K."/>
            <person name="Mottagui-Tabar S."/>
            <person name="Mulder N."/>
            <person name="Nakano N."/>
            <person name="Nakauchi H."/>
            <person name="Ng P."/>
            <person name="Nilsson R."/>
            <person name="Nishiguchi S."/>
            <person name="Nishikawa S."/>
            <person name="Nori F."/>
            <person name="Ohara O."/>
            <person name="Okazaki Y."/>
            <person name="Orlando V."/>
            <person name="Pang K.C."/>
            <person name="Pavan W.J."/>
            <person name="Pavesi G."/>
            <person name="Pesole G."/>
            <person name="Petrovsky N."/>
            <person name="Piazza S."/>
            <person name="Reed J."/>
            <person name="Reid J.F."/>
            <person name="Ring B.Z."/>
            <person name="Ringwald M."/>
            <person name="Rost B."/>
            <person name="Ruan Y."/>
            <person name="Salzberg S.L."/>
            <person name="Sandelin A."/>
            <person name="Schneider C."/>
            <person name="Schoenbach C."/>
            <person name="Sekiguchi K."/>
            <person name="Semple C.A."/>
            <person name="Seno S."/>
            <person name="Sessa L."/>
            <person name="Sheng Y."/>
            <person name="Shibata Y."/>
            <person name="Shimada H."/>
            <person name="Shimada K."/>
            <person name="Silva D."/>
            <person name="Sinclair B."/>
            <person name="Sperling S."/>
            <person name="Stupka E."/>
            <person name="Sugiura K."/>
            <person name="Sultana R."/>
            <person name="Takenaka Y."/>
            <person name="Taki K."/>
            <person name="Tammoja K."/>
            <person name="Tan S.L."/>
            <person name="Tang S."/>
            <person name="Taylor M.S."/>
            <person name="Tegner J."/>
            <person name="Teichmann S.A."/>
            <person name="Ueda H.R."/>
            <person name="van Nimwegen E."/>
            <person name="Verardo R."/>
            <person name="Wei C.L."/>
            <person name="Yagi K."/>
            <person name="Yamanishi H."/>
            <person name="Zabarovsky E."/>
            <person name="Zhu S."/>
            <person name="Zimmer A."/>
            <person name="Hide W."/>
            <person name="Bult C."/>
            <person name="Grimmond S.M."/>
            <person name="Teasdale R.D."/>
            <person name="Liu E.T."/>
            <person name="Brusic V."/>
            <person name="Quackenbush J."/>
            <person name="Wahlestedt C."/>
            <person name="Mattick J.S."/>
            <person name="Hume D.A."/>
            <person name="Kai C."/>
            <person name="Sasaki D."/>
            <person name="Tomaru Y."/>
            <person name="Fukuda S."/>
            <person name="Kanamori-Katayama M."/>
            <person name="Suzuki M."/>
            <person name="Aoki J."/>
            <person name="Arakawa T."/>
            <person name="Iida J."/>
            <person name="Imamura K."/>
            <person name="Itoh M."/>
            <person name="Kato T."/>
            <person name="Kawaji H."/>
            <person name="Kawagashira N."/>
            <person name="Kawashima T."/>
            <person name="Kojima M."/>
            <person name="Kondo S."/>
            <person name="Konno H."/>
            <person name="Nakano K."/>
            <person name="Ninomiya N."/>
            <person name="Nishio T."/>
            <person name="Okada M."/>
            <person name="Plessy C."/>
            <person name="Shibata K."/>
            <person name="Shiraki T."/>
            <person name="Suzuki S."/>
            <person name="Tagami M."/>
            <person name="Waki K."/>
            <person name="Watahiki A."/>
            <person name="Okamura-Oho Y."/>
            <person name="Suzuki H."/>
            <person name="Kawai J."/>
            <person name="Hayashizaki Y."/>
        </authorList>
    </citation>
    <scope>NUCLEOTIDE SEQUENCE [LARGE SCALE MRNA] (ISOFORMS 1; 2; 3 AND 4)</scope>
    <source>
        <strain>C57BL/6J</strain>
        <tissue>Corpus striatum</tissue>
        <tissue>Diencephalon</tissue>
        <tissue>Forelimb</tissue>
        <tissue>Testis</tissue>
    </source>
</reference>
<reference key="3">
    <citation type="journal article" date="2009" name="PLoS Biol.">
        <title>Lineage-specific biology revealed by a finished genome assembly of the mouse.</title>
        <authorList>
            <person name="Church D.M."/>
            <person name="Goodstadt L."/>
            <person name="Hillier L.W."/>
            <person name="Zody M.C."/>
            <person name="Goldstein S."/>
            <person name="She X."/>
            <person name="Bult C.J."/>
            <person name="Agarwala R."/>
            <person name="Cherry J.L."/>
            <person name="DiCuccio M."/>
            <person name="Hlavina W."/>
            <person name="Kapustin Y."/>
            <person name="Meric P."/>
            <person name="Maglott D."/>
            <person name="Birtle Z."/>
            <person name="Marques A.C."/>
            <person name="Graves T."/>
            <person name="Zhou S."/>
            <person name="Teague B."/>
            <person name="Potamousis K."/>
            <person name="Churas C."/>
            <person name="Place M."/>
            <person name="Herschleb J."/>
            <person name="Runnheim R."/>
            <person name="Forrest D."/>
            <person name="Amos-Landgraf J."/>
            <person name="Schwartz D.C."/>
            <person name="Cheng Z."/>
            <person name="Lindblad-Toh K."/>
            <person name="Eichler E.E."/>
            <person name="Ponting C.P."/>
        </authorList>
    </citation>
    <scope>NUCLEOTIDE SEQUENCE [LARGE SCALE GENOMIC DNA]</scope>
    <source>
        <strain>C57BL/6J</strain>
    </source>
</reference>
<reference key="4">
    <citation type="journal article" date="2004" name="Genome Res.">
        <title>The status, quality, and expansion of the NIH full-length cDNA project: the Mammalian Gene Collection (MGC).</title>
        <authorList>
            <consortium name="The MGC Project Team"/>
        </authorList>
    </citation>
    <scope>NUCLEOTIDE SEQUENCE [LARGE SCALE MRNA] (ISOFORMS 3 AND 4)</scope>
    <source>
        <tissue>Brain</tissue>
        <tissue>Testis</tissue>
    </source>
</reference>
<reference key="5">
    <citation type="journal article" date="2010" name="Cell">
        <title>A tissue-specific atlas of mouse protein phosphorylation and expression.</title>
        <authorList>
            <person name="Huttlin E.L."/>
            <person name="Jedrychowski M.P."/>
            <person name="Elias J.E."/>
            <person name="Goswami T."/>
            <person name="Rad R."/>
            <person name="Beausoleil S.A."/>
            <person name="Villen J."/>
            <person name="Haas W."/>
            <person name="Sowa M.E."/>
            <person name="Gygi S.P."/>
        </authorList>
    </citation>
    <scope>IDENTIFICATION BY MASS SPECTROMETRY [LARGE SCALE ANALYSIS]</scope>
    <source>
        <tissue>Brain</tissue>
        <tissue>Kidney</tissue>
        <tissue>Lung</tissue>
    </source>
</reference>
<reference key="6">
    <citation type="journal article" date="2014" name="Mol. Cell. Proteomics">
        <title>Immunoaffinity enrichment and mass spectrometry analysis of protein methylation.</title>
        <authorList>
            <person name="Guo A."/>
            <person name="Gu H."/>
            <person name="Zhou J."/>
            <person name="Mulhern D."/>
            <person name="Wang Y."/>
            <person name="Lee K.A."/>
            <person name="Yang V."/>
            <person name="Aguiar M."/>
            <person name="Kornhauser J."/>
            <person name="Jia X."/>
            <person name="Ren J."/>
            <person name="Beausoleil S.A."/>
            <person name="Silva J.C."/>
            <person name="Vemulapalli V."/>
            <person name="Bedford M.T."/>
            <person name="Comb M.J."/>
        </authorList>
    </citation>
    <scope>METHYLATION [LARGE SCALE ANALYSIS] AT ARG-566</scope>
    <scope>IDENTIFICATION BY MASS SPECTROMETRY [LARGE SCALE ANALYSIS]</scope>
    <source>
        <tissue>Brain</tissue>
    </source>
</reference>
<protein>
    <recommendedName>
        <fullName>Protein Smaug homolog 1</fullName>
        <shortName>Smaug 1</shortName>
        <shortName>mSmaug 1</shortName>
    </recommendedName>
    <alternativeName>
        <fullName>Sterile alpha motif domain-containing protein 4A</fullName>
    </alternativeName>
</protein>
<feature type="chain" id="PRO_0000097572" description="Protein Smaug homolog 1">
    <location>
        <begin position="1"/>
        <end position="711"/>
    </location>
</feature>
<feature type="domain" description="SAM">
    <location>
        <begin position="323"/>
        <end position="396"/>
    </location>
</feature>
<feature type="region of interest" description="Disordered" evidence="4">
    <location>
        <begin position="278"/>
        <end position="323"/>
    </location>
</feature>
<feature type="region of interest" description="Disordered" evidence="4">
    <location>
        <begin position="422"/>
        <end position="448"/>
    </location>
</feature>
<feature type="region of interest" description="Disordered" evidence="4">
    <location>
        <begin position="565"/>
        <end position="588"/>
    </location>
</feature>
<feature type="compositionally biased region" description="Polar residues" evidence="4">
    <location>
        <begin position="568"/>
        <end position="581"/>
    </location>
</feature>
<feature type="modified residue" description="Phosphoserine" evidence="3">
    <location>
        <position position="168"/>
    </location>
</feature>
<feature type="modified residue" description="Phosphoserine" evidence="3">
    <location>
        <position position="420"/>
    </location>
</feature>
<feature type="modified residue" description="Phosphothreonine" evidence="3">
    <location>
        <position position="424"/>
    </location>
</feature>
<feature type="modified residue" description="Omega-N-methylarginine" evidence="10">
    <location>
        <position position="566"/>
    </location>
</feature>
<feature type="modified residue" description="Phosphoserine" evidence="2">
    <location>
        <position position="573"/>
    </location>
</feature>
<feature type="splice variant" id="VSP_037781" description="In isoform 4." evidence="6 7">
    <location>
        <begin position="1"/>
        <end position="409"/>
    </location>
</feature>
<feature type="splice variant" id="VSP_037782" description="In isoform 2." evidence="7">
    <location>
        <begin position="1"/>
        <end position="101"/>
    </location>
</feature>
<feature type="splice variant" id="VSP_037783" description="In isoform 3." evidence="6 7 8">
    <original>ILSGQAHHSPLKRSVSLTPPMNVPNQPLGHGWMSHEDLRARGPQCLPSDHAPLSPQSSVASSGSGGSEHLEDQTTARNTFQEEGSGMKD</original>
    <variation>N</variation>
    <location>
        <begin position="239"/>
        <end position="327"/>
    </location>
</feature>
<feature type="sequence conflict" description="In Ref. 2; BAE22061." evidence="9" ref="2">
    <original>A</original>
    <variation>V</variation>
    <location>
        <position position="99"/>
    </location>
</feature>
<name>SMAG1_MOUSE</name>
<accession>Q8CBY1</accession>
<accession>A6H6C5</accession>
<accession>Q2VA55</accession>
<accession>Q3TQA5</accession>
<accession>Q3TTN7</accession>
<accession>Q3UZ00</accession>
<accession>Q9D3T3</accession>
<evidence type="ECO:0000250" key="1"/>
<evidence type="ECO:0000250" key="2">
    <source>
        <dbReference type="UniProtKB" id="B5DF21"/>
    </source>
</evidence>
<evidence type="ECO:0000250" key="3">
    <source>
        <dbReference type="UniProtKB" id="Q9UPU9"/>
    </source>
</evidence>
<evidence type="ECO:0000256" key="4">
    <source>
        <dbReference type="SAM" id="MobiDB-lite"/>
    </source>
</evidence>
<evidence type="ECO:0000269" key="5">
    <source>
    </source>
</evidence>
<evidence type="ECO:0000303" key="6">
    <source>
    </source>
</evidence>
<evidence type="ECO:0000303" key="7">
    <source>
    </source>
</evidence>
<evidence type="ECO:0000303" key="8">
    <source>
    </source>
</evidence>
<evidence type="ECO:0000305" key="9"/>
<evidence type="ECO:0007744" key="10">
    <source>
    </source>
</evidence>
<dbReference type="EMBL" id="DQ278487">
    <property type="protein sequence ID" value="ABB83932.1"/>
    <property type="status" value="ALT_SEQ"/>
    <property type="molecule type" value="mRNA"/>
</dbReference>
<dbReference type="EMBL" id="AK017081">
    <property type="protein sequence ID" value="BAB30585.1"/>
    <property type="molecule type" value="mRNA"/>
</dbReference>
<dbReference type="EMBL" id="AK034323">
    <property type="protein sequence ID" value="BAC28674.1"/>
    <property type="molecule type" value="mRNA"/>
</dbReference>
<dbReference type="EMBL" id="AK134243">
    <property type="protein sequence ID" value="BAE22061.1"/>
    <property type="molecule type" value="mRNA"/>
</dbReference>
<dbReference type="EMBL" id="AK161277">
    <property type="protein sequence ID" value="BAE36288.1"/>
    <property type="molecule type" value="mRNA"/>
</dbReference>
<dbReference type="EMBL" id="AK163751">
    <property type="protein sequence ID" value="BAE37479.1"/>
    <property type="molecule type" value="mRNA"/>
</dbReference>
<dbReference type="EMBL" id="AC131586">
    <property type="status" value="NOT_ANNOTATED_CDS"/>
    <property type="molecule type" value="Genomic_DNA"/>
</dbReference>
<dbReference type="EMBL" id="AC159006">
    <property type="status" value="NOT_ANNOTATED_CDS"/>
    <property type="molecule type" value="Genomic_DNA"/>
</dbReference>
<dbReference type="EMBL" id="CH466605">
    <property type="protein sequence ID" value="EDL20734.1"/>
    <property type="molecule type" value="Genomic_DNA"/>
</dbReference>
<dbReference type="EMBL" id="BC049740">
    <property type="protein sequence ID" value="AAH49740.1"/>
    <property type="molecule type" value="mRNA"/>
</dbReference>
<dbReference type="EMBL" id="BC145827">
    <property type="protein sequence ID" value="AAI45828.1"/>
    <property type="molecule type" value="mRNA"/>
</dbReference>
<dbReference type="EMBL" id="BC145829">
    <property type="protein sequence ID" value="AAI45830.1"/>
    <property type="molecule type" value="mRNA"/>
</dbReference>
<dbReference type="CCDS" id="CCDS26982.1">
    <molecule id="Q8CBY1-1"/>
</dbReference>
<dbReference type="CCDS" id="CCDS26983.1">
    <molecule id="Q8CBY1-3"/>
</dbReference>
<dbReference type="CCDS" id="CCDS49468.1">
    <molecule id="Q8CBY1-2"/>
</dbReference>
<dbReference type="CCDS" id="CCDS79301.1">
    <molecule id="Q8CBY1-4"/>
</dbReference>
<dbReference type="RefSeq" id="NP_001032298.1">
    <molecule id="Q8CBY1-1"/>
    <property type="nucleotide sequence ID" value="NM_001037221.2"/>
</dbReference>
<dbReference type="RefSeq" id="NP_001156905.1">
    <molecule id="Q8CBY1-2"/>
    <property type="nucleotide sequence ID" value="NM_001163433.1"/>
</dbReference>
<dbReference type="RefSeq" id="NP_001297473.1">
    <molecule id="Q8CBY1-4"/>
    <property type="nucleotide sequence ID" value="NM_001310544.1"/>
</dbReference>
<dbReference type="RefSeq" id="NP_083242.1">
    <molecule id="Q8CBY1-3"/>
    <property type="nucleotide sequence ID" value="NM_028966.3"/>
</dbReference>
<dbReference type="RefSeq" id="XP_006519694.1">
    <molecule id="Q8CBY1-4"/>
    <property type="nucleotide sequence ID" value="XM_006519631.3"/>
</dbReference>
<dbReference type="SMR" id="Q8CBY1"/>
<dbReference type="BioGRID" id="216786">
    <property type="interactions" value="1"/>
</dbReference>
<dbReference type="FunCoup" id="Q8CBY1">
    <property type="interactions" value="1054"/>
</dbReference>
<dbReference type="IntAct" id="Q8CBY1">
    <property type="interactions" value="1"/>
</dbReference>
<dbReference type="STRING" id="10090.ENSMUSP00000022386"/>
<dbReference type="GlyGen" id="Q8CBY1">
    <property type="glycosylation" value="3 sites, 1 O-linked glycan (3 sites)"/>
</dbReference>
<dbReference type="iPTMnet" id="Q8CBY1"/>
<dbReference type="PhosphoSitePlus" id="Q8CBY1"/>
<dbReference type="jPOST" id="Q8CBY1"/>
<dbReference type="PaxDb" id="10090-ENSMUSP00000022386"/>
<dbReference type="PeptideAtlas" id="Q8CBY1"/>
<dbReference type="ProteomicsDB" id="261509">
    <molecule id="Q8CBY1-1"/>
</dbReference>
<dbReference type="ProteomicsDB" id="261510">
    <molecule id="Q8CBY1-2"/>
</dbReference>
<dbReference type="ProteomicsDB" id="261511">
    <molecule id="Q8CBY1-3"/>
</dbReference>
<dbReference type="ProteomicsDB" id="261512">
    <molecule id="Q8CBY1-4"/>
</dbReference>
<dbReference type="Pumba" id="Q8CBY1"/>
<dbReference type="Antibodypedia" id="23948">
    <property type="antibodies" value="91 antibodies from 22 providers"/>
</dbReference>
<dbReference type="Ensembl" id="ENSMUST00000022386.15">
    <molecule id="Q8CBY1-1"/>
    <property type="protein sequence ID" value="ENSMUSP00000022386.9"/>
    <property type="gene ID" value="ENSMUSG00000021838.18"/>
</dbReference>
<dbReference type="Ensembl" id="ENSMUST00000100672.11">
    <molecule id="Q8CBY1-3"/>
    <property type="protein sequence ID" value="ENSMUSP00000098237.4"/>
    <property type="gene ID" value="ENSMUSG00000021838.18"/>
</dbReference>
<dbReference type="Ensembl" id="ENSMUST00000125113.9">
    <molecule id="Q8CBY1-2"/>
    <property type="protein sequence ID" value="ENSMUSP00000122833.2"/>
    <property type="gene ID" value="ENSMUSG00000021838.18"/>
</dbReference>
<dbReference type="Ensembl" id="ENSMUST00000125688.2">
    <molecule id="Q8CBY1-4"/>
    <property type="protein sequence ID" value="ENSMUSP00000115569.2"/>
    <property type="gene ID" value="ENSMUSG00000021838.18"/>
</dbReference>
<dbReference type="Ensembl" id="ENSMUST00000137543.9">
    <molecule id="Q8CBY1-3"/>
    <property type="protein sequence ID" value="ENSMUSP00000114621.2"/>
    <property type="gene ID" value="ENSMUSG00000021838.18"/>
</dbReference>
<dbReference type="GeneID" id="74480"/>
<dbReference type="KEGG" id="mmu:74480"/>
<dbReference type="UCSC" id="uc007thn.2">
    <molecule id="Q8CBY1-1"/>
    <property type="organism name" value="mouse"/>
</dbReference>
<dbReference type="UCSC" id="uc007tho.2">
    <molecule id="Q8CBY1-3"/>
    <property type="organism name" value="mouse"/>
</dbReference>
<dbReference type="UCSC" id="uc007thr.2">
    <molecule id="Q8CBY1-4"/>
    <property type="organism name" value="mouse"/>
</dbReference>
<dbReference type="AGR" id="MGI:1921730"/>
<dbReference type="CTD" id="74480"/>
<dbReference type="MGI" id="MGI:1921730">
    <property type="gene designation" value="Samd4"/>
</dbReference>
<dbReference type="VEuPathDB" id="HostDB:ENSMUSG00000021838"/>
<dbReference type="eggNOG" id="KOG3791">
    <property type="taxonomic scope" value="Eukaryota"/>
</dbReference>
<dbReference type="GeneTree" id="ENSGT00940000157933"/>
<dbReference type="HOGENOM" id="CLU_016365_0_1_1"/>
<dbReference type="InParanoid" id="Q8CBY1"/>
<dbReference type="OMA" id="NTSNWQD"/>
<dbReference type="OrthoDB" id="2155283at2759"/>
<dbReference type="PhylomeDB" id="Q8CBY1"/>
<dbReference type="TreeFam" id="TF324165"/>
<dbReference type="BioGRID-ORCS" id="74480">
    <property type="hits" value="6 hits in 77 CRISPR screens"/>
</dbReference>
<dbReference type="ChiTaRS" id="Samd4">
    <property type="organism name" value="mouse"/>
</dbReference>
<dbReference type="PRO" id="PR:Q8CBY1"/>
<dbReference type="Proteomes" id="UP000000589">
    <property type="component" value="Chromosome 14"/>
</dbReference>
<dbReference type="RNAct" id="Q8CBY1">
    <property type="molecule type" value="protein"/>
</dbReference>
<dbReference type="Bgee" id="ENSMUSG00000021838">
    <property type="expression patterns" value="Expressed in seminiferous tubule of testis and 231 other cell types or tissues"/>
</dbReference>
<dbReference type="ExpressionAtlas" id="Q8CBY1">
    <property type="expression patterns" value="baseline and differential"/>
</dbReference>
<dbReference type="GO" id="GO:0005829">
    <property type="term" value="C:cytosol"/>
    <property type="evidence" value="ECO:0007669"/>
    <property type="project" value="Ensembl"/>
</dbReference>
<dbReference type="GO" id="GO:0030425">
    <property type="term" value="C:dendrite"/>
    <property type="evidence" value="ECO:0007669"/>
    <property type="project" value="UniProtKB-SubCell"/>
</dbReference>
<dbReference type="GO" id="GO:0001650">
    <property type="term" value="C:fibrillar center"/>
    <property type="evidence" value="ECO:0007669"/>
    <property type="project" value="Ensembl"/>
</dbReference>
<dbReference type="GO" id="GO:0045202">
    <property type="term" value="C:synapse"/>
    <property type="evidence" value="ECO:0000314"/>
    <property type="project" value="MGI"/>
</dbReference>
<dbReference type="GO" id="GO:0003723">
    <property type="term" value="F:RNA binding"/>
    <property type="evidence" value="ECO:0007669"/>
    <property type="project" value="InterPro"/>
</dbReference>
<dbReference type="GO" id="GO:0030371">
    <property type="term" value="F:translation repressor activity"/>
    <property type="evidence" value="ECO:0000266"/>
    <property type="project" value="MGI"/>
</dbReference>
<dbReference type="GO" id="GO:0045727">
    <property type="term" value="P:positive regulation of translation"/>
    <property type="evidence" value="ECO:0000266"/>
    <property type="project" value="MGI"/>
</dbReference>
<dbReference type="GO" id="GO:0043488">
    <property type="term" value="P:regulation of mRNA stability"/>
    <property type="evidence" value="ECO:0007669"/>
    <property type="project" value="InterPro"/>
</dbReference>
<dbReference type="CDD" id="cd09557">
    <property type="entry name" value="SAM_Smaug"/>
    <property type="match status" value="1"/>
</dbReference>
<dbReference type="FunFam" id="1.10.150.50:FF:000013">
    <property type="entry name" value="Protein Smaug homolog 1 isoform 2"/>
    <property type="match status" value="1"/>
</dbReference>
<dbReference type="FunFam" id="1.25.40.170:FF:000001">
    <property type="entry name" value="Protein Smaug homolog 1 isoform 2"/>
    <property type="match status" value="1"/>
</dbReference>
<dbReference type="FunFam" id="1.25.40.170:FF:000002">
    <property type="entry name" value="Protein Smaug homolog 1 isoform 2"/>
    <property type="match status" value="1"/>
</dbReference>
<dbReference type="Gene3D" id="1.25.40.170">
    <property type="entry name" value="Smaug, PHAT domain"/>
    <property type="match status" value="2"/>
</dbReference>
<dbReference type="Gene3D" id="1.10.150.50">
    <property type="entry name" value="Transcription Factor, Ets-1"/>
    <property type="match status" value="1"/>
</dbReference>
<dbReference type="InterPro" id="IPR037093">
    <property type="entry name" value="PHAT_dom_sf"/>
</dbReference>
<dbReference type="InterPro" id="IPR001660">
    <property type="entry name" value="SAM"/>
</dbReference>
<dbReference type="InterPro" id="IPR013761">
    <property type="entry name" value="SAM/pointed_sf"/>
</dbReference>
<dbReference type="InterPro" id="IPR050897">
    <property type="entry name" value="SMAUG/VTS1_RNA-bind"/>
</dbReference>
<dbReference type="InterPro" id="IPR037634">
    <property type="entry name" value="Smaug_SAM"/>
</dbReference>
<dbReference type="PANTHER" id="PTHR12515:SF8">
    <property type="entry name" value="PROTEIN SMAUG HOMOLOG 1"/>
    <property type="match status" value="1"/>
</dbReference>
<dbReference type="PANTHER" id="PTHR12515">
    <property type="entry name" value="STERILE ALPHA MOTIF DOMAIN CONTAINING PROTEIN 4-RELATED"/>
    <property type="match status" value="1"/>
</dbReference>
<dbReference type="Pfam" id="PF00536">
    <property type="entry name" value="SAM_1"/>
    <property type="match status" value="1"/>
</dbReference>
<dbReference type="Pfam" id="PF25479">
    <property type="entry name" value="Vts1"/>
    <property type="match status" value="1"/>
</dbReference>
<dbReference type="SMART" id="SM00454">
    <property type="entry name" value="SAM"/>
    <property type="match status" value="1"/>
</dbReference>
<dbReference type="SUPFAM" id="SSF47769">
    <property type="entry name" value="SAM/Pointed domain"/>
    <property type="match status" value="1"/>
</dbReference>